<feature type="chain" id="PRO_0000378081" description="Putative mannosyltransferase YkcB">
    <location>
        <begin position="1"/>
        <end position="716"/>
    </location>
</feature>
<feature type="transmembrane region" description="Helical" evidence="1">
    <location>
        <begin position="8"/>
        <end position="28"/>
    </location>
</feature>
<feature type="transmembrane region" description="Helical" evidence="1">
    <location>
        <begin position="44"/>
        <end position="64"/>
    </location>
</feature>
<feature type="transmembrane region" description="Helical" evidence="1">
    <location>
        <begin position="87"/>
        <end position="107"/>
    </location>
</feature>
<feature type="transmembrane region" description="Helical" evidence="1">
    <location>
        <begin position="118"/>
        <end position="135"/>
    </location>
</feature>
<feature type="transmembrane region" description="Helical" evidence="1">
    <location>
        <begin position="137"/>
        <end position="157"/>
    </location>
</feature>
<feature type="transmembrane region" description="Helical" evidence="1">
    <location>
        <begin position="159"/>
        <end position="179"/>
    </location>
</feature>
<feature type="transmembrane region" description="Helical" evidence="1">
    <location>
        <begin position="180"/>
        <end position="200"/>
    </location>
</feature>
<feature type="transmembrane region" description="Helical" evidence="1">
    <location>
        <begin position="206"/>
        <end position="226"/>
    </location>
</feature>
<feature type="transmembrane region" description="Helical" evidence="1">
    <location>
        <begin position="376"/>
        <end position="396"/>
    </location>
</feature>
<feature type="transmembrane region" description="Helical" evidence="1">
    <location>
        <begin position="409"/>
        <end position="429"/>
    </location>
</feature>
<feature type="transmembrane region" description="Helical" evidence="1">
    <location>
        <begin position="433"/>
        <end position="453"/>
    </location>
</feature>
<feature type="transmembrane region" description="Helical" evidence="1">
    <location>
        <begin position="462"/>
        <end position="482"/>
    </location>
</feature>
<feature type="transmembrane region" description="Helical" evidence="1">
    <location>
        <begin position="491"/>
        <end position="511"/>
    </location>
</feature>
<feature type="transmembrane region" description="Helical" evidence="1">
    <location>
        <begin position="518"/>
        <end position="538"/>
    </location>
</feature>
<feature type="region of interest" description="Disordered" evidence="2">
    <location>
        <begin position="260"/>
        <end position="363"/>
    </location>
</feature>
<feature type="region of interest" description="Disordered" evidence="2">
    <location>
        <begin position="664"/>
        <end position="716"/>
    </location>
</feature>
<feature type="compositionally biased region" description="Polar residues" evidence="2">
    <location>
        <begin position="278"/>
        <end position="289"/>
    </location>
</feature>
<feature type="compositionally biased region" description="Low complexity" evidence="2">
    <location>
        <begin position="290"/>
        <end position="307"/>
    </location>
</feature>
<feature type="compositionally biased region" description="Gly residues" evidence="2">
    <location>
        <begin position="318"/>
        <end position="347"/>
    </location>
</feature>
<feature type="compositionally biased region" description="Low complexity" evidence="2">
    <location>
        <begin position="680"/>
        <end position="694"/>
    </location>
</feature>
<feature type="sequence conflict" description="In Ref. 1; CAA05568." evidence="3" ref="1">
    <original>PIAA</original>
    <variation>RFAP</variation>
    <location>
        <begin position="440"/>
        <end position="443"/>
    </location>
</feature>
<proteinExistence type="inferred from homology"/>
<comment type="subcellular location">
    <subcellularLocation>
        <location evidence="3">Cell membrane</location>
        <topology evidence="3">Multi-pass membrane protein</topology>
    </subcellularLocation>
</comment>
<comment type="similarity">
    <text evidence="3">Belongs to the glycosyltransferase 39 family.</text>
</comment>
<sequence length="716" mass="76342">MEKKKRELDIVLLLILLASAFLNIYNIWKDDTVNPYYTAAVTSMMQSFHNFFYASFDAAGFITVDKPPVTYQIQTISALIFGMHGWSVILPQALAGVGSVLLMYLLIKPTFGKTAARIASFVMACTPIAVAVARTNNVDALLVFFLLLATWLLFKAIRKGKLIWLLAAFFVVGVGFNTKMLQAYMILPAFLLFYLIAANATIKKKIVSLVSALAVLAAVSLSWPLIVDNIPASKRPYIGSSQTNSVLELAFGYNGIQRLTGQNSGGGQGAPNKDASKEMSSSDNTQAPPNQSSSNSSSSDGKSSNGNMAAPPSNGQMPSGGQGGPPSGGDGGQGGPGGDGGKGGTGTGSKMQSGSGMFGTGTPGPLRLFQQELSDQISWLLPFAIFGIAGLLIAGARERRRLSVEQKETVFWVAWLVPIAGFFSVAEFFHHYYLIMLAPPIAALVGAGWVALVHLYRNQTGWKAWLLPGAIIATTGFELFILRNYNDQIGVGWSIGVGVIGVLSAIALLLFKQRQKPFSYYVSLAALLALLVMPMYWASTPLLYGGNSSLPETGPQLASMSGKGMGMSDATVNEKLIKYLEENNSGAEYLFATTDSNTAAPYIIKTKKAVMAIGGYSGSDPAITLTQFKKLVKEGKVKYFLASGMGRGGNNDIVEWVEKNGKEVASEKWQSSSDQKTENTDSADTSSSKASGENGKMGGPGGMNQSATLYELHADE</sequence>
<accession>O34575</accession>
<accession>C0SP97</accession>
<accession>Q7B3Q8</accession>
<keyword id="KW-1003">Cell membrane</keyword>
<keyword id="KW-0328">Glycosyltransferase</keyword>
<keyword id="KW-0472">Membrane</keyword>
<keyword id="KW-1185">Reference proteome</keyword>
<keyword id="KW-0808">Transferase</keyword>
<keyword id="KW-0812">Transmembrane</keyword>
<keyword id="KW-1133">Transmembrane helix</keyword>
<reference key="1">
    <citation type="submission" date="1997-11" db="EMBL/GenBank/DDBJ databases">
        <title>Sequence of the Bacillus subtilis genome between xlyA and ykoR.</title>
        <authorList>
            <person name="Devine K.M."/>
        </authorList>
    </citation>
    <scope>NUCLEOTIDE SEQUENCE [GENOMIC DNA]</scope>
    <source>
        <strain>168</strain>
    </source>
</reference>
<reference key="2">
    <citation type="journal article" date="1997" name="Nature">
        <title>The complete genome sequence of the Gram-positive bacterium Bacillus subtilis.</title>
        <authorList>
            <person name="Kunst F."/>
            <person name="Ogasawara N."/>
            <person name="Moszer I."/>
            <person name="Albertini A.M."/>
            <person name="Alloni G."/>
            <person name="Azevedo V."/>
            <person name="Bertero M.G."/>
            <person name="Bessieres P."/>
            <person name="Bolotin A."/>
            <person name="Borchert S."/>
            <person name="Borriss R."/>
            <person name="Boursier L."/>
            <person name="Brans A."/>
            <person name="Braun M."/>
            <person name="Brignell S.C."/>
            <person name="Bron S."/>
            <person name="Brouillet S."/>
            <person name="Bruschi C.V."/>
            <person name="Caldwell B."/>
            <person name="Capuano V."/>
            <person name="Carter N.M."/>
            <person name="Choi S.-K."/>
            <person name="Codani J.-J."/>
            <person name="Connerton I.F."/>
            <person name="Cummings N.J."/>
            <person name="Daniel R.A."/>
            <person name="Denizot F."/>
            <person name="Devine K.M."/>
            <person name="Duesterhoeft A."/>
            <person name="Ehrlich S.D."/>
            <person name="Emmerson P.T."/>
            <person name="Entian K.-D."/>
            <person name="Errington J."/>
            <person name="Fabret C."/>
            <person name="Ferrari E."/>
            <person name="Foulger D."/>
            <person name="Fritz C."/>
            <person name="Fujita M."/>
            <person name="Fujita Y."/>
            <person name="Fuma S."/>
            <person name="Galizzi A."/>
            <person name="Galleron N."/>
            <person name="Ghim S.-Y."/>
            <person name="Glaser P."/>
            <person name="Goffeau A."/>
            <person name="Golightly E.J."/>
            <person name="Grandi G."/>
            <person name="Guiseppi G."/>
            <person name="Guy B.J."/>
            <person name="Haga K."/>
            <person name="Haiech J."/>
            <person name="Harwood C.R."/>
            <person name="Henaut A."/>
            <person name="Hilbert H."/>
            <person name="Holsappel S."/>
            <person name="Hosono S."/>
            <person name="Hullo M.-F."/>
            <person name="Itaya M."/>
            <person name="Jones L.-M."/>
            <person name="Joris B."/>
            <person name="Karamata D."/>
            <person name="Kasahara Y."/>
            <person name="Klaerr-Blanchard M."/>
            <person name="Klein C."/>
            <person name="Kobayashi Y."/>
            <person name="Koetter P."/>
            <person name="Koningstein G."/>
            <person name="Krogh S."/>
            <person name="Kumano M."/>
            <person name="Kurita K."/>
            <person name="Lapidus A."/>
            <person name="Lardinois S."/>
            <person name="Lauber J."/>
            <person name="Lazarevic V."/>
            <person name="Lee S.-M."/>
            <person name="Levine A."/>
            <person name="Liu H."/>
            <person name="Masuda S."/>
            <person name="Mauel C."/>
            <person name="Medigue C."/>
            <person name="Medina N."/>
            <person name="Mellado R.P."/>
            <person name="Mizuno M."/>
            <person name="Moestl D."/>
            <person name="Nakai S."/>
            <person name="Noback M."/>
            <person name="Noone D."/>
            <person name="O'Reilly M."/>
            <person name="Ogawa K."/>
            <person name="Ogiwara A."/>
            <person name="Oudega B."/>
            <person name="Park S.-H."/>
            <person name="Parro V."/>
            <person name="Pohl T.M."/>
            <person name="Portetelle D."/>
            <person name="Porwollik S."/>
            <person name="Prescott A.M."/>
            <person name="Presecan E."/>
            <person name="Pujic P."/>
            <person name="Purnelle B."/>
            <person name="Rapoport G."/>
            <person name="Rey M."/>
            <person name="Reynolds S."/>
            <person name="Rieger M."/>
            <person name="Rivolta C."/>
            <person name="Rocha E."/>
            <person name="Roche B."/>
            <person name="Rose M."/>
            <person name="Sadaie Y."/>
            <person name="Sato T."/>
            <person name="Scanlan E."/>
            <person name="Schleich S."/>
            <person name="Schroeter R."/>
            <person name="Scoffone F."/>
            <person name="Sekiguchi J."/>
            <person name="Sekowska A."/>
            <person name="Seror S.J."/>
            <person name="Serror P."/>
            <person name="Shin B.-S."/>
            <person name="Soldo B."/>
            <person name="Sorokin A."/>
            <person name="Tacconi E."/>
            <person name="Takagi T."/>
            <person name="Takahashi H."/>
            <person name="Takemaru K."/>
            <person name="Takeuchi M."/>
            <person name="Tamakoshi A."/>
            <person name="Tanaka T."/>
            <person name="Terpstra P."/>
            <person name="Tognoni A."/>
            <person name="Tosato V."/>
            <person name="Uchiyama S."/>
            <person name="Vandenbol M."/>
            <person name="Vannier F."/>
            <person name="Vassarotti A."/>
            <person name="Viari A."/>
            <person name="Wambutt R."/>
            <person name="Wedler E."/>
            <person name="Wedler H."/>
            <person name="Weitzenegger T."/>
            <person name="Winters P."/>
            <person name="Wipat A."/>
            <person name="Yamamoto H."/>
            <person name="Yamane K."/>
            <person name="Yasumoto K."/>
            <person name="Yata K."/>
            <person name="Yoshida K."/>
            <person name="Yoshikawa H.-F."/>
            <person name="Zumstein E."/>
            <person name="Yoshikawa H."/>
            <person name="Danchin A."/>
        </authorList>
    </citation>
    <scope>NUCLEOTIDE SEQUENCE [LARGE SCALE GENOMIC DNA]</scope>
    <source>
        <strain>168</strain>
    </source>
</reference>
<reference key="3">
    <citation type="journal article" date="2009" name="Microbiology">
        <title>From a consortium sequence to a unified sequence: the Bacillus subtilis 168 reference genome a decade later.</title>
        <authorList>
            <person name="Barbe V."/>
            <person name="Cruveiller S."/>
            <person name="Kunst F."/>
            <person name="Lenoble P."/>
            <person name="Meurice G."/>
            <person name="Sekowska A."/>
            <person name="Vallenet D."/>
            <person name="Wang T."/>
            <person name="Moszer I."/>
            <person name="Medigue C."/>
            <person name="Danchin A."/>
        </authorList>
    </citation>
    <scope>SEQUENCE REVISION</scope>
</reference>
<dbReference type="EC" id="2.4.1.-"/>
<dbReference type="EMBL" id="AJ002571">
    <property type="protein sequence ID" value="CAA05568.1"/>
    <property type="molecule type" value="Genomic_DNA"/>
</dbReference>
<dbReference type="EMBL" id="AL009126">
    <property type="protein sequence ID" value="CAB13145.2"/>
    <property type="molecule type" value="Genomic_DNA"/>
</dbReference>
<dbReference type="PIR" id="D69855">
    <property type="entry name" value="D69855"/>
</dbReference>
<dbReference type="RefSeq" id="NP_389171.2">
    <property type="nucleotide sequence ID" value="NC_000964.3"/>
</dbReference>
<dbReference type="RefSeq" id="WP_003245387.1">
    <property type="nucleotide sequence ID" value="NZ_OZ025638.1"/>
</dbReference>
<dbReference type="FunCoup" id="O34575">
    <property type="interactions" value="77"/>
</dbReference>
<dbReference type="STRING" id="224308.BSU12880"/>
<dbReference type="PaxDb" id="224308-BSU12880"/>
<dbReference type="EnsemblBacteria" id="CAB13145">
    <property type="protein sequence ID" value="CAB13145"/>
    <property type="gene ID" value="BSU_12880"/>
</dbReference>
<dbReference type="GeneID" id="939775"/>
<dbReference type="KEGG" id="bsu:BSU12880"/>
<dbReference type="PATRIC" id="fig|224308.179.peg.1398"/>
<dbReference type="eggNOG" id="COG1807">
    <property type="taxonomic scope" value="Bacteria"/>
</dbReference>
<dbReference type="InParanoid" id="O34575"/>
<dbReference type="OrthoDB" id="9810398at2"/>
<dbReference type="PhylomeDB" id="O34575"/>
<dbReference type="BioCyc" id="BSUB:BSU12880-MONOMER"/>
<dbReference type="Proteomes" id="UP000001570">
    <property type="component" value="Chromosome"/>
</dbReference>
<dbReference type="GO" id="GO:0005886">
    <property type="term" value="C:plasma membrane"/>
    <property type="evidence" value="ECO:0000318"/>
    <property type="project" value="GO_Central"/>
</dbReference>
<dbReference type="GO" id="GO:0016763">
    <property type="term" value="F:pentosyltransferase activity"/>
    <property type="evidence" value="ECO:0000318"/>
    <property type="project" value="GO_Central"/>
</dbReference>
<dbReference type="GO" id="GO:0009103">
    <property type="term" value="P:lipopolysaccharide biosynthetic process"/>
    <property type="evidence" value="ECO:0007669"/>
    <property type="project" value="UniProtKB-ARBA"/>
</dbReference>
<dbReference type="GO" id="GO:0010041">
    <property type="term" value="P:response to iron(III) ion"/>
    <property type="evidence" value="ECO:0000318"/>
    <property type="project" value="GO_Central"/>
</dbReference>
<dbReference type="InterPro" id="IPR050297">
    <property type="entry name" value="LipidA_mod_glycosyltrf_83"/>
</dbReference>
<dbReference type="InterPro" id="IPR038731">
    <property type="entry name" value="RgtA/B/C-like"/>
</dbReference>
<dbReference type="InterPro" id="IPR056785">
    <property type="entry name" value="YkcA/B-like_C"/>
</dbReference>
<dbReference type="PANTHER" id="PTHR33908">
    <property type="entry name" value="MANNOSYLTRANSFERASE YKCB-RELATED"/>
    <property type="match status" value="1"/>
</dbReference>
<dbReference type="PANTHER" id="PTHR33908:SF3">
    <property type="entry name" value="UNDECAPRENYL PHOSPHATE-ALPHA-4-AMINO-4-DEOXY-L-ARABINOSE ARABINOSYL TRANSFERASE"/>
    <property type="match status" value="1"/>
</dbReference>
<dbReference type="Pfam" id="PF13231">
    <property type="entry name" value="PMT_2"/>
    <property type="match status" value="1"/>
</dbReference>
<dbReference type="Pfam" id="PF24878">
    <property type="entry name" value="YkcB_C"/>
    <property type="match status" value="1"/>
</dbReference>
<evidence type="ECO:0000255" key="1"/>
<evidence type="ECO:0000256" key="2">
    <source>
        <dbReference type="SAM" id="MobiDB-lite"/>
    </source>
</evidence>
<evidence type="ECO:0000305" key="3"/>
<gene>
    <name type="primary">ykcB</name>
    <name type="ordered locus">BSU12880</name>
</gene>
<name>YKCB_BACSU</name>
<protein>
    <recommendedName>
        <fullName>Putative mannosyltransferase YkcB</fullName>
        <ecNumber>2.4.1.-</ecNumber>
    </recommendedName>
</protein>
<organism>
    <name type="scientific">Bacillus subtilis (strain 168)</name>
    <dbReference type="NCBI Taxonomy" id="224308"/>
    <lineage>
        <taxon>Bacteria</taxon>
        <taxon>Bacillati</taxon>
        <taxon>Bacillota</taxon>
        <taxon>Bacilli</taxon>
        <taxon>Bacillales</taxon>
        <taxon>Bacillaceae</taxon>
        <taxon>Bacillus</taxon>
    </lineage>
</organism>